<reference key="1">
    <citation type="submission" date="2007-02" db="EMBL/GenBank/DDBJ databases">
        <title>Characterization of liprins in the central nervous system.</title>
        <authorList>
            <person name="Spangler S.A."/>
            <person name="Hoogenraad C.C."/>
        </authorList>
    </citation>
    <scope>NUCLEOTIDE SEQUENCE [MRNA] (ISOFORM 3)</scope>
</reference>
<reference key="2">
    <citation type="journal article" date="2004" name="Nat. Genet.">
        <title>Complete sequencing and characterization of 21,243 full-length human cDNAs.</title>
        <authorList>
            <person name="Ota T."/>
            <person name="Suzuki Y."/>
            <person name="Nishikawa T."/>
            <person name="Otsuki T."/>
            <person name="Sugiyama T."/>
            <person name="Irie R."/>
            <person name="Wakamatsu A."/>
            <person name="Hayashi K."/>
            <person name="Sato H."/>
            <person name="Nagai K."/>
            <person name="Kimura K."/>
            <person name="Makita H."/>
            <person name="Sekine M."/>
            <person name="Obayashi M."/>
            <person name="Nishi T."/>
            <person name="Shibahara T."/>
            <person name="Tanaka T."/>
            <person name="Ishii S."/>
            <person name="Yamamoto J."/>
            <person name="Saito K."/>
            <person name="Kawai Y."/>
            <person name="Isono Y."/>
            <person name="Nakamura Y."/>
            <person name="Nagahari K."/>
            <person name="Murakami K."/>
            <person name="Yasuda T."/>
            <person name="Iwayanagi T."/>
            <person name="Wagatsuma M."/>
            <person name="Shiratori A."/>
            <person name="Sudo H."/>
            <person name="Hosoiri T."/>
            <person name="Kaku Y."/>
            <person name="Kodaira H."/>
            <person name="Kondo H."/>
            <person name="Sugawara M."/>
            <person name="Takahashi M."/>
            <person name="Kanda K."/>
            <person name="Yokoi T."/>
            <person name="Furuya T."/>
            <person name="Kikkawa E."/>
            <person name="Omura Y."/>
            <person name="Abe K."/>
            <person name="Kamihara K."/>
            <person name="Katsuta N."/>
            <person name="Sato K."/>
            <person name="Tanikawa M."/>
            <person name="Yamazaki M."/>
            <person name="Ninomiya K."/>
            <person name="Ishibashi T."/>
            <person name="Yamashita H."/>
            <person name="Murakawa K."/>
            <person name="Fujimori K."/>
            <person name="Tanai H."/>
            <person name="Kimata M."/>
            <person name="Watanabe M."/>
            <person name="Hiraoka S."/>
            <person name="Chiba Y."/>
            <person name="Ishida S."/>
            <person name="Ono Y."/>
            <person name="Takiguchi S."/>
            <person name="Watanabe S."/>
            <person name="Yosida M."/>
            <person name="Hotuta T."/>
            <person name="Kusano J."/>
            <person name="Kanehori K."/>
            <person name="Takahashi-Fujii A."/>
            <person name="Hara H."/>
            <person name="Tanase T.-O."/>
            <person name="Nomura Y."/>
            <person name="Togiya S."/>
            <person name="Komai F."/>
            <person name="Hara R."/>
            <person name="Takeuchi K."/>
            <person name="Arita M."/>
            <person name="Imose N."/>
            <person name="Musashino K."/>
            <person name="Yuuki H."/>
            <person name="Oshima A."/>
            <person name="Sasaki N."/>
            <person name="Aotsuka S."/>
            <person name="Yoshikawa Y."/>
            <person name="Matsunawa H."/>
            <person name="Ichihara T."/>
            <person name="Shiohata N."/>
            <person name="Sano S."/>
            <person name="Moriya S."/>
            <person name="Momiyama H."/>
            <person name="Satoh N."/>
            <person name="Takami S."/>
            <person name="Terashima Y."/>
            <person name="Suzuki O."/>
            <person name="Nakagawa S."/>
            <person name="Senoh A."/>
            <person name="Mizoguchi H."/>
            <person name="Goto Y."/>
            <person name="Shimizu F."/>
            <person name="Wakebe H."/>
            <person name="Hishigaki H."/>
            <person name="Watanabe T."/>
            <person name="Sugiyama A."/>
            <person name="Takemoto M."/>
            <person name="Kawakami B."/>
            <person name="Yamazaki M."/>
            <person name="Watanabe K."/>
            <person name="Kumagai A."/>
            <person name="Itakura S."/>
            <person name="Fukuzumi Y."/>
            <person name="Fujimori Y."/>
            <person name="Komiyama M."/>
            <person name="Tashiro H."/>
            <person name="Tanigami A."/>
            <person name="Fujiwara T."/>
            <person name="Ono T."/>
            <person name="Yamada K."/>
            <person name="Fujii Y."/>
            <person name="Ozaki K."/>
            <person name="Hirao M."/>
            <person name="Ohmori Y."/>
            <person name="Kawabata A."/>
            <person name="Hikiji T."/>
            <person name="Kobatake N."/>
            <person name="Inagaki H."/>
            <person name="Ikema Y."/>
            <person name="Okamoto S."/>
            <person name="Okitani R."/>
            <person name="Kawakami T."/>
            <person name="Noguchi S."/>
            <person name="Itoh T."/>
            <person name="Shigeta K."/>
            <person name="Senba T."/>
            <person name="Matsumura K."/>
            <person name="Nakajima Y."/>
            <person name="Mizuno T."/>
            <person name="Morinaga M."/>
            <person name="Sasaki M."/>
            <person name="Togashi T."/>
            <person name="Oyama M."/>
            <person name="Hata H."/>
            <person name="Watanabe M."/>
            <person name="Komatsu T."/>
            <person name="Mizushima-Sugano J."/>
            <person name="Satoh T."/>
            <person name="Shirai Y."/>
            <person name="Takahashi Y."/>
            <person name="Nakagawa K."/>
            <person name="Okumura K."/>
            <person name="Nagase T."/>
            <person name="Nomura N."/>
            <person name="Kikuchi H."/>
            <person name="Masuho Y."/>
            <person name="Yamashita R."/>
            <person name="Nakai K."/>
            <person name="Yada T."/>
            <person name="Nakamura Y."/>
            <person name="Ohara O."/>
            <person name="Isogai T."/>
            <person name="Sugano S."/>
        </authorList>
    </citation>
    <scope>NUCLEOTIDE SEQUENCE [LARGE SCALE MRNA] (ISOFORM 1)</scope>
    <source>
        <tissue>Cerebellum</tissue>
    </source>
</reference>
<reference key="3">
    <citation type="journal article" date="2006" name="Nature">
        <title>The DNA sequence and biological annotation of human chromosome 1.</title>
        <authorList>
            <person name="Gregory S.G."/>
            <person name="Barlow K.F."/>
            <person name="McLay K.E."/>
            <person name="Kaul R."/>
            <person name="Swarbreck D."/>
            <person name="Dunham A."/>
            <person name="Scott C.E."/>
            <person name="Howe K.L."/>
            <person name="Woodfine K."/>
            <person name="Spencer C.C.A."/>
            <person name="Jones M.C."/>
            <person name="Gillson C."/>
            <person name="Searle S."/>
            <person name="Zhou Y."/>
            <person name="Kokocinski F."/>
            <person name="McDonald L."/>
            <person name="Evans R."/>
            <person name="Phillips K."/>
            <person name="Atkinson A."/>
            <person name="Cooper R."/>
            <person name="Jones C."/>
            <person name="Hall R.E."/>
            <person name="Andrews T.D."/>
            <person name="Lloyd C."/>
            <person name="Ainscough R."/>
            <person name="Almeida J.P."/>
            <person name="Ambrose K.D."/>
            <person name="Anderson F."/>
            <person name="Andrew R.W."/>
            <person name="Ashwell R.I.S."/>
            <person name="Aubin K."/>
            <person name="Babbage A.K."/>
            <person name="Bagguley C.L."/>
            <person name="Bailey J."/>
            <person name="Beasley H."/>
            <person name="Bethel G."/>
            <person name="Bird C.P."/>
            <person name="Bray-Allen S."/>
            <person name="Brown J.Y."/>
            <person name="Brown A.J."/>
            <person name="Buckley D."/>
            <person name="Burton J."/>
            <person name="Bye J."/>
            <person name="Carder C."/>
            <person name="Chapman J.C."/>
            <person name="Clark S.Y."/>
            <person name="Clarke G."/>
            <person name="Clee C."/>
            <person name="Cobley V."/>
            <person name="Collier R.E."/>
            <person name="Corby N."/>
            <person name="Coville G.J."/>
            <person name="Davies J."/>
            <person name="Deadman R."/>
            <person name="Dunn M."/>
            <person name="Earthrowl M."/>
            <person name="Ellington A.G."/>
            <person name="Errington H."/>
            <person name="Frankish A."/>
            <person name="Frankland J."/>
            <person name="French L."/>
            <person name="Garner P."/>
            <person name="Garnett J."/>
            <person name="Gay L."/>
            <person name="Ghori M.R.J."/>
            <person name="Gibson R."/>
            <person name="Gilby L.M."/>
            <person name="Gillett W."/>
            <person name="Glithero R.J."/>
            <person name="Grafham D.V."/>
            <person name="Griffiths C."/>
            <person name="Griffiths-Jones S."/>
            <person name="Grocock R."/>
            <person name="Hammond S."/>
            <person name="Harrison E.S.I."/>
            <person name="Hart E."/>
            <person name="Haugen E."/>
            <person name="Heath P.D."/>
            <person name="Holmes S."/>
            <person name="Holt K."/>
            <person name="Howden P.J."/>
            <person name="Hunt A.R."/>
            <person name="Hunt S.E."/>
            <person name="Hunter G."/>
            <person name="Isherwood J."/>
            <person name="James R."/>
            <person name="Johnson C."/>
            <person name="Johnson D."/>
            <person name="Joy A."/>
            <person name="Kay M."/>
            <person name="Kershaw J.K."/>
            <person name="Kibukawa M."/>
            <person name="Kimberley A.M."/>
            <person name="King A."/>
            <person name="Knights A.J."/>
            <person name="Lad H."/>
            <person name="Laird G."/>
            <person name="Lawlor S."/>
            <person name="Leongamornlert D.A."/>
            <person name="Lloyd D.M."/>
            <person name="Loveland J."/>
            <person name="Lovell J."/>
            <person name="Lush M.J."/>
            <person name="Lyne R."/>
            <person name="Martin S."/>
            <person name="Mashreghi-Mohammadi M."/>
            <person name="Matthews L."/>
            <person name="Matthews N.S.W."/>
            <person name="McLaren S."/>
            <person name="Milne S."/>
            <person name="Mistry S."/>
            <person name="Moore M.J.F."/>
            <person name="Nickerson T."/>
            <person name="O'Dell C.N."/>
            <person name="Oliver K."/>
            <person name="Palmeiri A."/>
            <person name="Palmer S.A."/>
            <person name="Parker A."/>
            <person name="Patel D."/>
            <person name="Pearce A.V."/>
            <person name="Peck A.I."/>
            <person name="Pelan S."/>
            <person name="Phelps K."/>
            <person name="Phillimore B.J."/>
            <person name="Plumb R."/>
            <person name="Rajan J."/>
            <person name="Raymond C."/>
            <person name="Rouse G."/>
            <person name="Saenphimmachak C."/>
            <person name="Sehra H.K."/>
            <person name="Sheridan E."/>
            <person name="Shownkeen R."/>
            <person name="Sims S."/>
            <person name="Skuce C.D."/>
            <person name="Smith M."/>
            <person name="Steward C."/>
            <person name="Subramanian S."/>
            <person name="Sycamore N."/>
            <person name="Tracey A."/>
            <person name="Tromans A."/>
            <person name="Van Helmond Z."/>
            <person name="Wall M."/>
            <person name="Wallis J.M."/>
            <person name="White S."/>
            <person name="Whitehead S.L."/>
            <person name="Wilkinson J.E."/>
            <person name="Willey D.L."/>
            <person name="Williams H."/>
            <person name="Wilming L."/>
            <person name="Wray P.W."/>
            <person name="Wu Z."/>
            <person name="Coulson A."/>
            <person name="Vaudin M."/>
            <person name="Sulston J.E."/>
            <person name="Durbin R.M."/>
            <person name="Hubbard T."/>
            <person name="Wooster R."/>
            <person name="Dunham I."/>
            <person name="Carter N.P."/>
            <person name="McVean G."/>
            <person name="Ross M.T."/>
            <person name="Harrow J."/>
            <person name="Olson M.V."/>
            <person name="Beck S."/>
            <person name="Rogers J."/>
            <person name="Bentley D.R."/>
        </authorList>
    </citation>
    <scope>NUCLEOTIDE SEQUENCE [LARGE SCALE GENOMIC DNA]</scope>
</reference>
<reference key="4">
    <citation type="journal article" date="2004" name="Genome Res.">
        <title>The status, quality, and expansion of the NIH full-length cDNA project: the Mammalian Gene Collection (MGC).</title>
        <authorList>
            <consortium name="The MGC Project Team"/>
        </authorList>
    </citation>
    <scope>NUCLEOTIDE SEQUENCE [LARGE SCALE MRNA] (ISOFORMS 1 AND 2)</scope>
</reference>
<reference key="5">
    <citation type="journal article" date="1998" name="J. Biol. Chem.">
        <title>Liprins, a family of LAR transmembrane protein-tyrosine phosphatase-interacting proteins.</title>
        <authorList>
            <person name="Serra-Pages C."/>
            <person name="Medley Q.G."/>
            <person name="Tang M."/>
            <person name="Hart A."/>
            <person name="Streuli M."/>
        </authorList>
    </citation>
    <scope>NUCLEOTIDE SEQUENCE [MRNA] OF 626-1134 (ISOFORM 2)</scope>
    <scope>TISSUE SPECIFICITY</scope>
    <source>
        <tissue>Brain</tissue>
        <tissue>Fetal brain</tissue>
        <tissue>Heart</tissue>
        <tissue>Kidney</tissue>
    </source>
</reference>
<reference key="6">
    <citation type="journal article" date="1998" name="DNA Res.">
        <title>Prediction of the coding sequences of unidentified human genes. XII. The complete sequences of 100 new cDNA clones from brain which code for large proteins in vitro.</title>
        <authorList>
            <person name="Nagase T."/>
            <person name="Ishikawa K."/>
            <person name="Suyama M."/>
            <person name="Kikuno R."/>
            <person name="Hirosawa M."/>
            <person name="Miyajima N."/>
            <person name="Tanaka A."/>
            <person name="Kotani H."/>
            <person name="Nomura N."/>
            <person name="Ohara O."/>
        </authorList>
    </citation>
    <scope>NUCLEOTIDE SEQUENCE [LARGE SCALE MRNA] OF 767-1185 (ISOFORM 1)</scope>
    <source>
        <tissue>Brain</tissue>
    </source>
</reference>
<reference key="7">
    <citation type="journal article" date="2003" name="Int. J. Mol. Med.">
        <title>Identification and characterization of human PPFIA4 gene in silico.</title>
        <authorList>
            <person name="Katoh M."/>
            <person name="Katoh M."/>
        </authorList>
    </citation>
    <scope>IDENTIFICATION</scope>
</reference>
<keyword id="KW-0025">Alternative splicing</keyword>
<keyword id="KW-0175">Coiled coil</keyword>
<keyword id="KW-0963">Cytoplasm</keyword>
<keyword id="KW-0597">Phosphoprotein</keyword>
<keyword id="KW-1267">Proteomics identification</keyword>
<keyword id="KW-1185">Reference proteome</keyword>
<keyword id="KW-0677">Repeat</keyword>
<proteinExistence type="evidence at protein level"/>
<dbReference type="EMBL" id="EF428334">
    <property type="protein sequence ID" value="ABR09268.1"/>
    <property type="molecule type" value="mRNA"/>
</dbReference>
<dbReference type="EMBL" id="AK126624">
    <property type="protein sequence ID" value="BAC86617.1"/>
    <property type="molecule type" value="mRNA"/>
</dbReference>
<dbReference type="EMBL" id="AC096632">
    <property type="status" value="NOT_ANNOTATED_CDS"/>
    <property type="molecule type" value="Genomic_DNA"/>
</dbReference>
<dbReference type="EMBL" id="AC105940">
    <property type="status" value="NOT_ANNOTATED_CDS"/>
    <property type="molecule type" value="Genomic_DNA"/>
</dbReference>
<dbReference type="EMBL" id="AL451082">
    <property type="status" value="NOT_ANNOTATED_CDS"/>
    <property type="molecule type" value="Genomic_DNA"/>
</dbReference>
<dbReference type="EMBL" id="BC132923">
    <property type="protein sequence ID" value="AAI32924.1"/>
    <property type="molecule type" value="mRNA"/>
</dbReference>
<dbReference type="EMBL" id="BC132925">
    <property type="protein sequence ID" value="AAI32926.1"/>
    <property type="molecule type" value="mRNA"/>
</dbReference>
<dbReference type="EMBL" id="BC144262">
    <property type="protein sequence ID" value="AAI44263.1"/>
    <property type="molecule type" value="mRNA"/>
</dbReference>
<dbReference type="EMBL" id="AF034801">
    <property type="protein sequence ID" value="AAC26102.1"/>
    <property type="molecule type" value="mRNA"/>
</dbReference>
<dbReference type="EMBL" id="AB020704">
    <property type="protein sequence ID" value="BAA74920.1"/>
    <property type="molecule type" value="mRNA"/>
</dbReference>
<dbReference type="RefSeq" id="NP_001291260.1">
    <property type="nucleotide sequence ID" value="NM_001304331.1"/>
</dbReference>
<dbReference type="RefSeq" id="NP_001291261.1">
    <property type="nucleotide sequence ID" value="NM_001304332.1"/>
</dbReference>
<dbReference type="SMR" id="O75335"/>
<dbReference type="BioGRID" id="114069">
    <property type="interactions" value="8"/>
</dbReference>
<dbReference type="FunCoup" id="O75335">
    <property type="interactions" value="171"/>
</dbReference>
<dbReference type="IntAct" id="O75335">
    <property type="interactions" value="3"/>
</dbReference>
<dbReference type="STRING" id="9606.ENSP00000402576"/>
<dbReference type="GlyCosmos" id="O75335">
    <property type="glycosylation" value="1 site, 1 glycan"/>
</dbReference>
<dbReference type="GlyGen" id="O75335">
    <property type="glycosylation" value="1 site, 1 O-linked glycan (1 site)"/>
</dbReference>
<dbReference type="iPTMnet" id="O75335"/>
<dbReference type="PhosphoSitePlus" id="O75335"/>
<dbReference type="BioMuta" id="PPFIA4"/>
<dbReference type="jPOST" id="O75335"/>
<dbReference type="MassIVE" id="O75335"/>
<dbReference type="PaxDb" id="9606-ENSP00000272198"/>
<dbReference type="PeptideAtlas" id="O75335"/>
<dbReference type="ProteomicsDB" id="3392"/>
<dbReference type="ProteomicsDB" id="49906">
    <molecule id="O75335-3"/>
</dbReference>
<dbReference type="ProteomicsDB" id="49907">
    <molecule id="O75335-2"/>
</dbReference>
<dbReference type="Antibodypedia" id="34537">
    <property type="antibodies" value="39 antibodies from 16 providers"/>
</dbReference>
<dbReference type="DNASU" id="8497"/>
<dbReference type="Ensembl" id="ENST00000272198.10">
    <molecule id="O75335-1"/>
    <property type="protein sequence ID" value="ENSP00000272198.6"/>
    <property type="gene ID" value="ENSG00000143847.16"/>
</dbReference>
<dbReference type="Ensembl" id="ENST00000447715.6">
    <molecule id="O75335-3"/>
    <property type="protein sequence ID" value="ENSP00000402576.1"/>
    <property type="gene ID" value="ENSG00000143847.16"/>
</dbReference>
<dbReference type="Ensembl" id="ENST00000599966.5">
    <molecule id="O75335-2"/>
    <property type="protein sequence ID" value="ENSP00000471264.1"/>
    <property type="gene ID" value="ENSG00000143847.16"/>
</dbReference>
<dbReference type="GeneID" id="8497"/>
<dbReference type="KEGG" id="hsa:8497"/>
<dbReference type="UCSC" id="uc001gyz.3">
    <molecule id="O75335-3"/>
    <property type="organism name" value="human"/>
</dbReference>
<dbReference type="AGR" id="HGNC:9248"/>
<dbReference type="CTD" id="8497"/>
<dbReference type="DisGeNET" id="8497"/>
<dbReference type="GeneCards" id="PPFIA4"/>
<dbReference type="HGNC" id="HGNC:9248">
    <property type="gene designation" value="PPFIA4"/>
</dbReference>
<dbReference type="HPA" id="ENSG00000143847">
    <property type="expression patterns" value="Tissue enriched (brain)"/>
</dbReference>
<dbReference type="MIM" id="603145">
    <property type="type" value="gene"/>
</dbReference>
<dbReference type="neXtProt" id="NX_O75335"/>
<dbReference type="OpenTargets" id="ENSG00000143847"/>
<dbReference type="PharmGKB" id="PA33569"/>
<dbReference type="VEuPathDB" id="HostDB:ENSG00000143847"/>
<dbReference type="eggNOG" id="KOG0249">
    <property type="taxonomic scope" value="Eukaryota"/>
</dbReference>
<dbReference type="GeneTree" id="ENSGT01050000244900"/>
<dbReference type="HOGENOM" id="CLU_006923_2_0_1"/>
<dbReference type="InParanoid" id="O75335"/>
<dbReference type="OrthoDB" id="2132119at2759"/>
<dbReference type="PAN-GO" id="O75335">
    <property type="GO annotations" value="2 GO annotations based on evolutionary models"/>
</dbReference>
<dbReference type="TreeFam" id="TF314207"/>
<dbReference type="PathwayCommons" id="O75335"/>
<dbReference type="Reactome" id="R-HSA-181429">
    <property type="pathway name" value="Serotonin Neurotransmitter Release Cycle"/>
</dbReference>
<dbReference type="Reactome" id="R-HSA-181430">
    <property type="pathway name" value="Norepinephrine Neurotransmitter Release Cycle"/>
</dbReference>
<dbReference type="Reactome" id="R-HSA-210500">
    <property type="pathway name" value="Glutamate Neurotransmitter Release Cycle"/>
</dbReference>
<dbReference type="Reactome" id="R-HSA-212676">
    <property type="pathway name" value="Dopamine Neurotransmitter Release Cycle"/>
</dbReference>
<dbReference type="Reactome" id="R-HSA-264642">
    <property type="pathway name" value="Acetylcholine Neurotransmitter Release Cycle"/>
</dbReference>
<dbReference type="Reactome" id="R-HSA-388844">
    <property type="pathway name" value="Receptor-type tyrosine-protein phosphatases"/>
</dbReference>
<dbReference type="SignaLink" id="O75335"/>
<dbReference type="BioGRID-ORCS" id="8497">
    <property type="hits" value="22 hits in 1157 CRISPR screens"/>
</dbReference>
<dbReference type="CD-CODE" id="FB4E32DD">
    <property type="entry name" value="Presynaptic clusters and postsynaptic densities"/>
</dbReference>
<dbReference type="ChiTaRS" id="PPFIA4">
    <property type="organism name" value="human"/>
</dbReference>
<dbReference type="GeneWiki" id="PPFIA4"/>
<dbReference type="GenomeRNAi" id="8497"/>
<dbReference type="Pharos" id="O75335">
    <property type="development level" value="Tbio"/>
</dbReference>
<dbReference type="PRO" id="PR:O75335"/>
<dbReference type="Proteomes" id="UP000005640">
    <property type="component" value="Chromosome 1"/>
</dbReference>
<dbReference type="RNAct" id="O75335">
    <property type="molecule type" value="protein"/>
</dbReference>
<dbReference type="Bgee" id="ENSG00000143847">
    <property type="expression patterns" value="Expressed in cerebellar hemisphere and 130 other cell types or tissues"/>
</dbReference>
<dbReference type="ExpressionAtlas" id="O75335">
    <property type="expression patterns" value="baseline and differential"/>
</dbReference>
<dbReference type="GO" id="GO:0009986">
    <property type="term" value="C:cell surface"/>
    <property type="evidence" value="ECO:0007669"/>
    <property type="project" value="UniProtKB-SubCell"/>
</dbReference>
<dbReference type="GO" id="GO:0005829">
    <property type="term" value="C:cytosol"/>
    <property type="evidence" value="ECO:0000304"/>
    <property type="project" value="Reactome"/>
</dbReference>
<dbReference type="GO" id="GO:0048786">
    <property type="term" value="C:presynaptic active zone"/>
    <property type="evidence" value="ECO:0000318"/>
    <property type="project" value="GO_Central"/>
</dbReference>
<dbReference type="GO" id="GO:0045202">
    <property type="term" value="C:synapse"/>
    <property type="evidence" value="ECO:0000250"/>
    <property type="project" value="ParkinsonsUK-UCL"/>
</dbReference>
<dbReference type="GO" id="GO:0050808">
    <property type="term" value="P:synapse organization"/>
    <property type="evidence" value="ECO:0000318"/>
    <property type="project" value="GO_Central"/>
</dbReference>
<dbReference type="CDD" id="cd09562">
    <property type="entry name" value="SAM_liprin-alpha1_2_3_4_repeat1"/>
    <property type="match status" value="1"/>
</dbReference>
<dbReference type="CDD" id="cd09565">
    <property type="entry name" value="SAM_liprin-alpha1_2_3_4_repeat2"/>
    <property type="match status" value="1"/>
</dbReference>
<dbReference type="CDD" id="cd09568">
    <property type="entry name" value="SAM_liprin-alpha1_2_3_4_repeat3"/>
    <property type="match status" value="1"/>
</dbReference>
<dbReference type="FunFam" id="1.10.150.50:FF:000003">
    <property type="entry name" value="liprin-alpha-2 isoform X1"/>
    <property type="match status" value="1"/>
</dbReference>
<dbReference type="FunFam" id="1.10.150.50:FF:000002">
    <property type="entry name" value="PTPRF interacting protein alpha 1"/>
    <property type="match status" value="1"/>
</dbReference>
<dbReference type="FunFam" id="1.10.150.50:FF:000004">
    <property type="entry name" value="PTPRF interacting protein alpha 1"/>
    <property type="match status" value="1"/>
</dbReference>
<dbReference type="Gene3D" id="1.10.150.50">
    <property type="entry name" value="Transcription Factor, Ets-1"/>
    <property type="match status" value="3"/>
</dbReference>
<dbReference type="InterPro" id="IPR029515">
    <property type="entry name" value="Liprin"/>
</dbReference>
<dbReference type="InterPro" id="IPR037620">
    <property type="entry name" value="Liprin-alpha_SAM_rpt_1"/>
</dbReference>
<dbReference type="InterPro" id="IPR037621">
    <property type="entry name" value="Liprin-alpha_SAM_rpt_2"/>
</dbReference>
<dbReference type="InterPro" id="IPR037622">
    <property type="entry name" value="Liprin-alpha_SAM_rpt_3"/>
</dbReference>
<dbReference type="InterPro" id="IPR001660">
    <property type="entry name" value="SAM"/>
</dbReference>
<dbReference type="InterPro" id="IPR013761">
    <property type="entry name" value="SAM/pointed_sf"/>
</dbReference>
<dbReference type="PANTHER" id="PTHR12587">
    <property type="entry name" value="LAR INTERACTING PROTEIN LIP -RELATED PROTEIN"/>
    <property type="match status" value="1"/>
</dbReference>
<dbReference type="PANTHER" id="PTHR12587:SF5">
    <property type="entry name" value="LIPRIN-ALPHA-4"/>
    <property type="match status" value="1"/>
</dbReference>
<dbReference type="Pfam" id="PF00536">
    <property type="entry name" value="SAM_1"/>
    <property type="match status" value="2"/>
</dbReference>
<dbReference type="Pfam" id="PF07647">
    <property type="entry name" value="SAM_2"/>
    <property type="match status" value="1"/>
</dbReference>
<dbReference type="SMART" id="SM00454">
    <property type="entry name" value="SAM"/>
    <property type="match status" value="3"/>
</dbReference>
<dbReference type="SUPFAM" id="SSF47769">
    <property type="entry name" value="SAM/Pointed domain"/>
    <property type="match status" value="3"/>
</dbReference>
<dbReference type="PROSITE" id="PS50105">
    <property type="entry name" value="SAM_DOMAIN"/>
    <property type="match status" value="3"/>
</dbReference>
<gene>
    <name type="primary">PPFIA4</name>
    <name type="synonym">KIAA0897</name>
</gene>
<comment type="function">
    <text evidence="1">May regulate the disassembly of focal adhesions. May localize receptor-like tyrosine phosphatases type 2A at specific sites on the plasma membrane, possibly regulating their interaction with the extracellular environment and their association with substrates (By similarity).</text>
</comment>
<comment type="subunit">
    <text evidence="2">Forms homodimers and heterodimers with liprins-alpha and liprins-beta. Interacts with the second PTPase domain of PTPRD, PTPRF and PTPRS. Interacts with RIMS1 and RIMS2 (By similarity). Interacts with GIT1 and GIT2 (By similarity). Interacts with GRIP1 (By similarity). Interacts with KIF1A (By similarity).</text>
</comment>
<comment type="subcellular location">
    <subcellularLocation>
        <location evidence="1">Cytoplasm</location>
    </subcellularLocation>
    <subcellularLocation>
        <location evidence="1">Cell surface</location>
    </subcellularLocation>
    <text evidence="1">Colocalizes with PTPRF at the cell surface.</text>
</comment>
<comment type="alternative products">
    <event type="alternative splicing"/>
    <isoform>
        <id>O75335-3</id>
        <name>3</name>
        <sequence type="displayed"/>
    </isoform>
    <isoform>
        <id>O75335-1</id>
        <name>1</name>
        <sequence type="described" ref="VSP_053668 VSP_053669"/>
    </isoform>
    <isoform>
        <id>O75335-2</id>
        <name>2</name>
        <sequence type="described" ref="VSP_053668 VSP_053669 VSP_053670"/>
    </isoform>
</comment>
<comment type="tissue specificity">
    <text evidence="6">Expressed only in the heart, brain, and skeletal muscle.</text>
</comment>
<comment type="domain">
    <text evidence="1">The N-terminal coiled coil regions mediate homodimerization preferentially and heterodimerization type alpha/alpha. The C-terminal, non-coiled coil regions mediate heterodimerization type alpha/beta and interaction with PTPRD, PTPRF and PTPRS (By similarity).</text>
</comment>
<comment type="similarity">
    <text evidence="11">Belongs to the liprin family. Liprin-alpha subfamily.</text>
</comment>
<organism>
    <name type="scientific">Homo sapiens</name>
    <name type="common">Human</name>
    <dbReference type="NCBI Taxonomy" id="9606"/>
    <lineage>
        <taxon>Eukaryota</taxon>
        <taxon>Metazoa</taxon>
        <taxon>Chordata</taxon>
        <taxon>Craniata</taxon>
        <taxon>Vertebrata</taxon>
        <taxon>Euteleostomi</taxon>
        <taxon>Mammalia</taxon>
        <taxon>Eutheria</taxon>
        <taxon>Euarchontoglires</taxon>
        <taxon>Primates</taxon>
        <taxon>Haplorrhini</taxon>
        <taxon>Catarrhini</taxon>
        <taxon>Hominidae</taxon>
        <taxon>Homo</taxon>
    </lineage>
</organism>
<accession>O75335</accession>
<accession>A2RUJ5</accession>
<accession>B1APN8</accession>
<accession>B1N949</accession>
<accession>B7ZM43</accession>
<accession>O94971</accession>
<sequence>MCEVMPTINEGDRLGPPHGADADANFEQLMVNMLDEREKLLESLRESQETLAATQSRLQDAIHERDQLQRHLNSALPQEFATLTRELSMCREQLLEREEEISELKAERNNTRLLLEHLECLVSRHERSLRMTVVKRQAQSPSGVSSEVEVLKALKSLFEHHKALDEKVRERLRAALERVTTLEEQLAGAHQQVSALQQGAGVRDGAAEEEGTVELGPKRLWKEDTGRVEELQELLEKQNFELSQARERLVTLTTTVTELEEDLGTARRDLIKSEELSSKHQRDLREALAQKEDMEERITTLEKRYLAAQREATSIHDLNDKLENELANKESLHRQCEEKARHLQELLEVAEQKLQQTMRKAETLPEVEAELAQRIAALTKAEERHGNIEEHLRQLEGQLEEKNQELARTAVQVRQREKMNEDHNKRLSDTVDRLLSESNERLQLHLKERMAALEEKNTLIQELESSQRQIEEQHHHKGRLSEEIEKLRQEVDQLKGRGGPFVDGVHSRSHMGSAADVRFSLGTTTHAPPGVHRRYSALREESAKLALPLTVTLRSPTWMRMSQGVCCNLEYHSSGTLCGSSGPLPVPEMIQEEKESTELRAEEIETRVTSGSMEALNLKQLRKRGSIPTSLTALSLASASPPLSGRSTPKLTSRSAAQDLDRMGVMTLPSDLRKHRRKLLSPVSREENREDKATIKCETSPPSSPRTLRLEKLGHPALSQEEGKSALEDQGSNPSSSNSSQDSLHKGAKRKGIKSSIGRLFGKKEKGRLIQLSRDGATGHVLLTDSEFSMQEPMVPAKLGTQAEKDRRLKKKHQLLEDARRKGMPFAQWDGPTVVSWLELWVGMPAWYVAACRANVKSGAIMSALSDTEIQREIGISNALHRLKLRLAIQEMVSLTSPSAPPTSRTSSGNVWVTHEEMETLETSTKTDSEEGSWAQTLAYGDMNHEWIGNEWLPSLGLPQYRSYFMECLVDARMLDHLTKKDLRVHLKMVDSFHRTSLQYGIMCLKRLNYDRKELEKRREESQHEIKDVLVWTNDQVVHWVQSIGLRDYAGNLHESGVHGALLALDENFDHNTLALILQIPTQNTQARQVMEREFNNLLALGTDRKLDDGDDKVFRRAPSWRKRFRPREHHGRGGMLSASAETLPAGFRVSTLGTLQPPPAPPKKIMPEAHSHYLYGHMLSAFRD</sequence>
<evidence type="ECO:0000250" key="1"/>
<evidence type="ECO:0000250" key="2">
    <source>
        <dbReference type="UniProtKB" id="Q91Z80"/>
    </source>
</evidence>
<evidence type="ECO:0000255" key="3"/>
<evidence type="ECO:0000255" key="4">
    <source>
        <dbReference type="PROSITE-ProRule" id="PRU00184"/>
    </source>
</evidence>
<evidence type="ECO:0000256" key="5">
    <source>
        <dbReference type="SAM" id="MobiDB-lite"/>
    </source>
</evidence>
<evidence type="ECO:0000269" key="6">
    <source>
    </source>
</evidence>
<evidence type="ECO:0000303" key="7">
    <source>
    </source>
</evidence>
<evidence type="ECO:0000303" key="8">
    <source>
    </source>
</evidence>
<evidence type="ECO:0000303" key="9">
    <source>
    </source>
</evidence>
<evidence type="ECO:0000303" key="10">
    <source>
    </source>
</evidence>
<evidence type="ECO:0000305" key="11"/>
<protein>
    <recommendedName>
        <fullName>Liprin-alpha-4</fullName>
    </recommendedName>
    <alternativeName>
        <fullName>Protein tyrosine phosphatase receptor type f polypeptide-interacting protein alpha-4</fullName>
        <shortName>PTPRF-interacting protein alpha-4</shortName>
    </alternativeName>
</protein>
<feature type="chain" id="PRO_0000191032" description="Liprin-alpha-4">
    <location>
        <begin position="1"/>
        <end position="1185"/>
    </location>
</feature>
<feature type="domain" description="SAM 1" evidence="4">
    <location>
        <begin position="829"/>
        <end position="895"/>
    </location>
</feature>
<feature type="domain" description="SAM 2" evidence="4">
    <location>
        <begin position="944"/>
        <end position="1008"/>
    </location>
</feature>
<feature type="domain" description="SAM 3" evidence="4">
    <location>
        <begin position="1032"/>
        <end position="1101"/>
    </location>
</feature>
<feature type="region of interest" description="Disordered" evidence="5">
    <location>
        <begin position="638"/>
        <end position="709"/>
    </location>
</feature>
<feature type="region of interest" description="Disordered" evidence="5">
    <location>
        <begin position="721"/>
        <end position="757"/>
    </location>
</feature>
<feature type="coiled-coil region" evidence="3">
    <location>
        <begin position="24"/>
        <end position="123"/>
    </location>
</feature>
<feature type="coiled-coil region" evidence="3">
    <location>
        <begin position="165"/>
        <end position="499"/>
    </location>
</feature>
<feature type="compositionally biased region" description="Polar residues" evidence="5">
    <location>
        <begin position="645"/>
        <end position="656"/>
    </location>
</feature>
<feature type="compositionally biased region" description="Basic and acidic residues" evidence="5">
    <location>
        <begin position="684"/>
        <end position="695"/>
    </location>
</feature>
<feature type="compositionally biased region" description="Low complexity" evidence="5">
    <location>
        <begin position="729"/>
        <end position="742"/>
    </location>
</feature>
<feature type="modified residue" description="Phosphoserine" evidence="2">
    <location>
        <position position="640"/>
    </location>
</feature>
<feature type="modified residue" description="Phosphoserine" evidence="2">
    <location>
        <position position="681"/>
    </location>
</feature>
<feature type="splice variant" id="VSP_053668" description="In isoform 1 and isoform 2." evidence="7 8 9 10">
    <location>
        <begin position="1"/>
        <end position="510"/>
    </location>
</feature>
<feature type="splice variant" id="VSP_053669" description="In isoform 1 and isoform 2." evidence="7 8 9 10">
    <original>LALPLTVTLRSPTWMRMSQGVCCNLEYHSSGTLCGSSGPLPVPE</original>
    <variation>DWETSPLPGMLAPAAGPAFDSDPEISDVDEDEPGGLVGSADVVSPSGHSDAQTLAMMLQEQLDAINEEIR</variation>
    <location>
        <begin position="545"/>
        <end position="588"/>
    </location>
</feature>
<feature type="splice variant" id="VSP_053670" description="In isoform 2." evidence="9 10">
    <location>
        <begin position="928"/>
        <end position="936"/>
    </location>
</feature>
<feature type="sequence conflict" description="In Ref. 3; AAI44263." evidence="11" ref="3">
    <original>A</original>
    <variation>S</variation>
    <location>
        <position position="803"/>
    </location>
</feature>
<feature type="sequence conflict" description="In Ref. 5; AAC26102." evidence="11" ref="5">
    <original>G</original>
    <variation>A</variation>
    <location>
        <position position="1134"/>
    </location>
</feature>
<name>LIPA4_HUMAN</name>